<feature type="chain" id="PRO_1000020388" description="Threonine--tRNA ligase">
    <location>
        <begin position="1"/>
        <end position="672"/>
    </location>
</feature>
<feature type="domain" description="TGS" evidence="2">
    <location>
        <begin position="1"/>
        <end position="64"/>
    </location>
</feature>
<feature type="region of interest" description="Catalytic" evidence="1">
    <location>
        <begin position="257"/>
        <end position="566"/>
    </location>
</feature>
<feature type="binding site" evidence="1">
    <location>
        <position position="362"/>
    </location>
    <ligand>
        <name>Zn(2+)</name>
        <dbReference type="ChEBI" id="CHEBI:29105"/>
    </ligand>
</feature>
<feature type="binding site" evidence="1">
    <location>
        <position position="413"/>
    </location>
    <ligand>
        <name>Zn(2+)</name>
        <dbReference type="ChEBI" id="CHEBI:29105"/>
    </ligand>
</feature>
<feature type="binding site" evidence="1">
    <location>
        <position position="543"/>
    </location>
    <ligand>
        <name>Zn(2+)</name>
        <dbReference type="ChEBI" id="CHEBI:29105"/>
    </ligand>
</feature>
<comment type="function">
    <text evidence="1">Catalyzes the attachment of threonine to tRNA(Thr) in a two-step reaction: L-threonine is first activated by ATP to form Thr-AMP and then transferred to the acceptor end of tRNA(Thr). Also edits incorrectly charged L-seryl-tRNA(Thr).</text>
</comment>
<comment type="catalytic activity">
    <reaction evidence="1">
        <text>tRNA(Thr) + L-threonine + ATP = L-threonyl-tRNA(Thr) + AMP + diphosphate + H(+)</text>
        <dbReference type="Rhea" id="RHEA:24624"/>
        <dbReference type="Rhea" id="RHEA-COMP:9670"/>
        <dbReference type="Rhea" id="RHEA-COMP:9704"/>
        <dbReference type="ChEBI" id="CHEBI:15378"/>
        <dbReference type="ChEBI" id="CHEBI:30616"/>
        <dbReference type="ChEBI" id="CHEBI:33019"/>
        <dbReference type="ChEBI" id="CHEBI:57926"/>
        <dbReference type="ChEBI" id="CHEBI:78442"/>
        <dbReference type="ChEBI" id="CHEBI:78534"/>
        <dbReference type="ChEBI" id="CHEBI:456215"/>
        <dbReference type="EC" id="6.1.1.3"/>
    </reaction>
</comment>
<comment type="cofactor">
    <cofactor evidence="1">
        <name>Zn(2+)</name>
        <dbReference type="ChEBI" id="CHEBI:29105"/>
    </cofactor>
    <text evidence="1">Binds 1 zinc ion per subunit.</text>
</comment>
<comment type="subunit">
    <text evidence="1">Homodimer.</text>
</comment>
<comment type="subcellular location">
    <subcellularLocation>
        <location evidence="1">Cytoplasm</location>
    </subcellularLocation>
</comment>
<comment type="similarity">
    <text evidence="1">Belongs to the class-II aminoacyl-tRNA synthetase family.</text>
</comment>
<sequence>MTELLKISLPDGSVREMEAGATPADVAAAIGPGLAKAALAAKVDGEVRDLNRPFEGDAELALITSRDEEEALELARHDYAHVLAEAVQALWPGTQITFGPATDDGFYYDVKAPDSRDPFGMDDLPAIEEKMREIIKADKPLVREVWSREQLIEKWEAEGEVFKAEWAKELPEDEELTVYWSGEPGGEDSWLDMCRGPHLASTGKLDPQAFKLMRVAGAYWRGDQRNPQLTRIYGTGWLNKKQLNAHLHRLEEAAKRDHRKLGREMDLFHLQEEAHGSVFWHPQGYKIWRELEAYMRRKMDGAGYREIKTPQVMDARQWEQSGHWGKYRENMFVIPDEIPNTEDEGELVSKDADWMALKPMNCPAHVLVFKQGITSYRDLPIRLGEMGCCHRNEPHGALHGLMRVRQFTQDDAHIFCTEDQVVEEVRAFCKLADEVYRDFGFDYDVKLALRPEQRFGSEEDWDKAEQELRDAVAEAGMANDDYGWEELPGEGAFYAPKLEWHLTDAIGRTWQVGTIQGDRVLPERLDATYVGEDGGKHRPVMLHRAIFGSYERFIGILIEHFAGRLPVWLAPTQAVVATIVSDADGYAKEAVAKLEAAGIRVDGDLRNEKINFKVREHSLAKVPHLLVVGKREAEEGTVAVRTLGEKEQQVMSLDDAIAMLKDAATPPDLRDG</sequence>
<organism>
    <name type="scientific">Erythrobacter litoralis (strain HTCC2594)</name>
    <dbReference type="NCBI Taxonomy" id="314225"/>
    <lineage>
        <taxon>Bacteria</taxon>
        <taxon>Pseudomonadati</taxon>
        <taxon>Pseudomonadota</taxon>
        <taxon>Alphaproteobacteria</taxon>
        <taxon>Sphingomonadales</taxon>
        <taxon>Erythrobacteraceae</taxon>
        <taxon>Erythrobacter/Porphyrobacter group</taxon>
        <taxon>Erythrobacter</taxon>
    </lineage>
</organism>
<protein>
    <recommendedName>
        <fullName evidence="1">Threonine--tRNA ligase</fullName>
        <ecNumber evidence="1">6.1.1.3</ecNumber>
    </recommendedName>
    <alternativeName>
        <fullName evidence="1">Threonyl-tRNA synthetase</fullName>
        <shortName evidence="1">ThrRS</shortName>
    </alternativeName>
</protein>
<dbReference type="EC" id="6.1.1.3" evidence="1"/>
<dbReference type="EMBL" id="CP000157">
    <property type="protein sequence ID" value="ABC64566.1"/>
    <property type="molecule type" value="Genomic_DNA"/>
</dbReference>
<dbReference type="RefSeq" id="WP_011415388.1">
    <property type="nucleotide sequence ID" value="NC_007722.1"/>
</dbReference>
<dbReference type="SMR" id="Q2N6X5"/>
<dbReference type="STRING" id="314225.ELI_12370"/>
<dbReference type="KEGG" id="eli:ELI_12370"/>
<dbReference type="eggNOG" id="COG0441">
    <property type="taxonomic scope" value="Bacteria"/>
</dbReference>
<dbReference type="HOGENOM" id="CLU_008554_0_1_5"/>
<dbReference type="OrthoDB" id="9802304at2"/>
<dbReference type="Proteomes" id="UP000008808">
    <property type="component" value="Chromosome"/>
</dbReference>
<dbReference type="GO" id="GO:0005829">
    <property type="term" value="C:cytosol"/>
    <property type="evidence" value="ECO:0007669"/>
    <property type="project" value="TreeGrafter"/>
</dbReference>
<dbReference type="GO" id="GO:0005524">
    <property type="term" value="F:ATP binding"/>
    <property type="evidence" value="ECO:0007669"/>
    <property type="project" value="UniProtKB-UniRule"/>
</dbReference>
<dbReference type="GO" id="GO:0046872">
    <property type="term" value="F:metal ion binding"/>
    <property type="evidence" value="ECO:0007669"/>
    <property type="project" value="UniProtKB-KW"/>
</dbReference>
<dbReference type="GO" id="GO:0004829">
    <property type="term" value="F:threonine-tRNA ligase activity"/>
    <property type="evidence" value="ECO:0007669"/>
    <property type="project" value="UniProtKB-UniRule"/>
</dbReference>
<dbReference type="GO" id="GO:0000049">
    <property type="term" value="F:tRNA binding"/>
    <property type="evidence" value="ECO:0007669"/>
    <property type="project" value="UniProtKB-KW"/>
</dbReference>
<dbReference type="GO" id="GO:0006435">
    <property type="term" value="P:threonyl-tRNA aminoacylation"/>
    <property type="evidence" value="ECO:0007669"/>
    <property type="project" value="UniProtKB-UniRule"/>
</dbReference>
<dbReference type="CDD" id="cd01667">
    <property type="entry name" value="TGS_ThrRS"/>
    <property type="match status" value="1"/>
</dbReference>
<dbReference type="CDD" id="cd00860">
    <property type="entry name" value="ThrRS_anticodon"/>
    <property type="match status" value="1"/>
</dbReference>
<dbReference type="CDD" id="cd00771">
    <property type="entry name" value="ThrRS_core"/>
    <property type="match status" value="1"/>
</dbReference>
<dbReference type="FunFam" id="3.10.20.30:FF:000005">
    <property type="entry name" value="Threonine--tRNA ligase"/>
    <property type="match status" value="1"/>
</dbReference>
<dbReference type="FunFam" id="3.30.930.10:FF:000002">
    <property type="entry name" value="Threonine--tRNA ligase"/>
    <property type="match status" value="1"/>
</dbReference>
<dbReference type="FunFam" id="3.40.50.800:FF:000001">
    <property type="entry name" value="Threonine--tRNA ligase"/>
    <property type="match status" value="1"/>
</dbReference>
<dbReference type="Gene3D" id="3.10.20.30">
    <property type="match status" value="1"/>
</dbReference>
<dbReference type="Gene3D" id="3.30.54.20">
    <property type="match status" value="1"/>
</dbReference>
<dbReference type="Gene3D" id="3.40.50.800">
    <property type="entry name" value="Anticodon-binding domain"/>
    <property type="match status" value="1"/>
</dbReference>
<dbReference type="Gene3D" id="3.30.930.10">
    <property type="entry name" value="Bira Bifunctional Protein, Domain 2"/>
    <property type="match status" value="1"/>
</dbReference>
<dbReference type="Gene3D" id="3.30.980.10">
    <property type="entry name" value="Threonyl-trna Synthetase, Chain A, domain 2"/>
    <property type="match status" value="1"/>
</dbReference>
<dbReference type="HAMAP" id="MF_00184">
    <property type="entry name" value="Thr_tRNA_synth"/>
    <property type="match status" value="1"/>
</dbReference>
<dbReference type="InterPro" id="IPR002314">
    <property type="entry name" value="aa-tRNA-synt_IIb"/>
</dbReference>
<dbReference type="InterPro" id="IPR006195">
    <property type="entry name" value="aa-tRNA-synth_II"/>
</dbReference>
<dbReference type="InterPro" id="IPR045864">
    <property type="entry name" value="aa-tRNA-synth_II/BPL/LPL"/>
</dbReference>
<dbReference type="InterPro" id="IPR004154">
    <property type="entry name" value="Anticodon-bd"/>
</dbReference>
<dbReference type="InterPro" id="IPR036621">
    <property type="entry name" value="Anticodon-bd_dom_sf"/>
</dbReference>
<dbReference type="InterPro" id="IPR012675">
    <property type="entry name" value="Beta-grasp_dom_sf"/>
</dbReference>
<dbReference type="InterPro" id="IPR004095">
    <property type="entry name" value="TGS"/>
</dbReference>
<dbReference type="InterPro" id="IPR012676">
    <property type="entry name" value="TGS-like"/>
</dbReference>
<dbReference type="InterPro" id="IPR002320">
    <property type="entry name" value="Thr-tRNA-ligase_IIa"/>
</dbReference>
<dbReference type="InterPro" id="IPR018163">
    <property type="entry name" value="Thr/Ala-tRNA-synth_IIc_edit"/>
</dbReference>
<dbReference type="InterPro" id="IPR047246">
    <property type="entry name" value="ThrRS_anticodon"/>
</dbReference>
<dbReference type="InterPro" id="IPR033728">
    <property type="entry name" value="ThrRS_core"/>
</dbReference>
<dbReference type="InterPro" id="IPR012947">
    <property type="entry name" value="tRNA_SAD"/>
</dbReference>
<dbReference type="NCBIfam" id="TIGR00418">
    <property type="entry name" value="thrS"/>
    <property type="match status" value="1"/>
</dbReference>
<dbReference type="PANTHER" id="PTHR11451:SF44">
    <property type="entry name" value="THREONINE--TRNA LIGASE, CHLOROPLASTIC_MITOCHONDRIAL 2"/>
    <property type="match status" value="1"/>
</dbReference>
<dbReference type="PANTHER" id="PTHR11451">
    <property type="entry name" value="THREONINE-TRNA LIGASE"/>
    <property type="match status" value="1"/>
</dbReference>
<dbReference type="Pfam" id="PF03129">
    <property type="entry name" value="HGTP_anticodon"/>
    <property type="match status" value="1"/>
</dbReference>
<dbReference type="Pfam" id="PF02824">
    <property type="entry name" value="TGS"/>
    <property type="match status" value="1"/>
</dbReference>
<dbReference type="Pfam" id="PF00587">
    <property type="entry name" value="tRNA-synt_2b"/>
    <property type="match status" value="1"/>
</dbReference>
<dbReference type="Pfam" id="PF07973">
    <property type="entry name" value="tRNA_SAD"/>
    <property type="match status" value="1"/>
</dbReference>
<dbReference type="PRINTS" id="PR01047">
    <property type="entry name" value="TRNASYNTHTHR"/>
</dbReference>
<dbReference type="SMART" id="SM00863">
    <property type="entry name" value="tRNA_SAD"/>
    <property type="match status" value="1"/>
</dbReference>
<dbReference type="SUPFAM" id="SSF52954">
    <property type="entry name" value="Class II aaRS ABD-related"/>
    <property type="match status" value="1"/>
</dbReference>
<dbReference type="SUPFAM" id="SSF55681">
    <property type="entry name" value="Class II aaRS and biotin synthetases"/>
    <property type="match status" value="1"/>
</dbReference>
<dbReference type="SUPFAM" id="SSF81271">
    <property type="entry name" value="TGS-like"/>
    <property type="match status" value="1"/>
</dbReference>
<dbReference type="SUPFAM" id="SSF55186">
    <property type="entry name" value="ThrRS/AlaRS common domain"/>
    <property type="match status" value="1"/>
</dbReference>
<dbReference type="PROSITE" id="PS50862">
    <property type="entry name" value="AA_TRNA_LIGASE_II"/>
    <property type="match status" value="1"/>
</dbReference>
<dbReference type="PROSITE" id="PS51880">
    <property type="entry name" value="TGS"/>
    <property type="match status" value="1"/>
</dbReference>
<gene>
    <name evidence="1" type="primary">thrS</name>
    <name type="ordered locus">ELI_12370</name>
</gene>
<name>SYT_ERYLH</name>
<keyword id="KW-0030">Aminoacyl-tRNA synthetase</keyword>
<keyword id="KW-0067">ATP-binding</keyword>
<keyword id="KW-0963">Cytoplasm</keyword>
<keyword id="KW-0436">Ligase</keyword>
<keyword id="KW-0479">Metal-binding</keyword>
<keyword id="KW-0547">Nucleotide-binding</keyword>
<keyword id="KW-0648">Protein biosynthesis</keyword>
<keyword id="KW-1185">Reference proteome</keyword>
<keyword id="KW-0694">RNA-binding</keyword>
<keyword id="KW-0820">tRNA-binding</keyword>
<keyword id="KW-0862">Zinc</keyword>
<reference key="1">
    <citation type="journal article" date="2009" name="J. Bacteriol.">
        <title>Complete genome sequence of Erythrobacter litoralis HTCC2594.</title>
        <authorList>
            <person name="Oh H.M."/>
            <person name="Giovannoni S.J."/>
            <person name="Ferriera S."/>
            <person name="Johnson J."/>
            <person name="Cho J.C."/>
        </authorList>
    </citation>
    <scope>NUCLEOTIDE SEQUENCE [LARGE SCALE GENOMIC DNA]</scope>
    <source>
        <strain>HTCC2594</strain>
    </source>
</reference>
<accession>Q2N6X5</accession>
<evidence type="ECO:0000255" key="1">
    <source>
        <dbReference type="HAMAP-Rule" id="MF_00184"/>
    </source>
</evidence>
<evidence type="ECO:0000255" key="2">
    <source>
        <dbReference type="PROSITE-ProRule" id="PRU01228"/>
    </source>
</evidence>
<proteinExistence type="inferred from homology"/>